<name>RLMN_HAEIE</name>
<feature type="chain" id="PRO_0000350203" description="Dual-specificity RNA methyltransferase RlmN">
    <location>
        <begin position="1"/>
        <end position="390"/>
    </location>
</feature>
<feature type="domain" description="Radical SAM core" evidence="2">
    <location>
        <begin position="116"/>
        <end position="355"/>
    </location>
</feature>
<feature type="active site" description="Proton acceptor" evidence="1">
    <location>
        <position position="110"/>
    </location>
</feature>
<feature type="active site" description="S-methylcysteine intermediate" evidence="1">
    <location>
        <position position="360"/>
    </location>
</feature>
<feature type="binding site" evidence="1">
    <location>
        <position position="130"/>
    </location>
    <ligand>
        <name>[4Fe-4S] cluster</name>
        <dbReference type="ChEBI" id="CHEBI:49883"/>
        <note>4Fe-4S-S-AdoMet</note>
    </ligand>
</feature>
<feature type="binding site" evidence="1">
    <location>
        <position position="134"/>
    </location>
    <ligand>
        <name>[4Fe-4S] cluster</name>
        <dbReference type="ChEBI" id="CHEBI:49883"/>
        <note>4Fe-4S-S-AdoMet</note>
    </ligand>
</feature>
<feature type="binding site" evidence="1">
    <location>
        <position position="137"/>
    </location>
    <ligand>
        <name>[4Fe-4S] cluster</name>
        <dbReference type="ChEBI" id="CHEBI:49883"/>
        <note>4Fe-4S-S-AdoMet</note>
    </ligand>
</feature>
<feature type="binding site" evidence="1">
    <location>
        <begin position="184"/>
        <end position="185"/>
    </location>
    <ligand>
        <name>S-adenosyl-L-methionine</name>
        <dbReference type="ChEBI" id="CHEBI:59789"/>
    </ligand>
</feature>
<feature type="binding site" evidence="1">
    <location>
        <position position="216"/>
    </location>
    <ligand>
        <name>S-adenosyl-L-methionine</name>
        <dbReference type="ChEBI" id="CHEBI:59789"/>
    </ligand>
</feature>
<feature type="binding site" evidence="1">
    <location>
        <begin position="238"/>
        <end position="240"/>
    </location>
    <ligand>
        <name>S-adenosyl-L-methionine</name>
        <dbReference type="ChEBI" id="CHEBI:59789"/>
    </ligand>
</feature>
<feature type="binding site" evidence="1">
    <location>
        <position position="317"/>
    </location>
    <ligand>
        <name>S-adenosyl-L-methionine</name>
        <dbReference type="ChEBI" id="CHEBI:59789"/>
    </ligand>
</feature>
<feature type="disulfide bond" description="(transient)" evidence="1">
    <location>
        <begin position="123"/>
        <end position="360"/>
    </location>
</feature>
<protein>
    <recommendedName>
        <fullName evidence="1">Dual-specificity RNA methyltransferase RlmN</fullName>
        <ecNumber evidence="1">2.1.1.192</ecNumber>
    </recommendedName>
    <alternativeName>
        <fullName evidence="1">23S rRNA (adenine(2503)-C(2))-methyltransferase</fullName>
    </alternativeName>
    <alternativeName>
        <fullName evidence="1">23S rRNA m2A2503 methyltransferase</fullName>
    </alternativeName>
    <alternativeName>
        <fullName evidence="1">Ribosomal RNA large subunit methyltransferase N</fullName>
    </alternativeName>
    <alternativeName>
        <fullName evidence="1">tRNA (adenine(37)-C(2))-methyltransferase</fullName>
    </alternativeName>
    <alternativeName>
        <fullName evidence="1">tRNA m2A37 methyltransferase</fullName>
    </alternativeName>
</protein>
<proteinExistence type="inferred from homology"/>
<reference key="1">
    <citation type="journal article" date="2007" name="Genome Biol.">
        <title>Characterization and modeling of the Haemophilus influenzae core and supragenomes based on the complete genomic sequences of Rd and 12 clinical nontypeable strains.</title>
        <authorList>
            <person name="Hogg J.S."/>
            <person name="Hu F.Z."/>
            <person name="Janto B."/>
            <person name="Boissy R."/>
            <person name="Hayes J."/>
            <person name="Keefe R."/>
            <person name="Post J.C."/>
            <person name="Ehrlich G.D."/>
        </authorList>
    </citation>
    <scope>NUCLEOTIDE SEQUENCE [LARGE SCALE GENOMIC DNA]</scope>
    <source>
        <strain>PittEE</strain>
    </source>
</reference>
<organism>
    <name type="scientific">Haemophilus influenzae (strain PittEE)</name>
    <dbReference type="NCBI Taxonomy" id="374930"/>
    <lineage>
        <taxon>Bacteria</taxon>
        <taxon>Pseudomonadati</taxon>
        <taxon>Pseudomonadota</taxon>
        <taxon>Gammaproteobacteria</taxon>
        <taxon>Pasteurellales</taxon>
        <taxon>Pasteurellaceae</taxon>
        <taxon>Haemophilus</taxon>
    </lineage>
</organism>
<gene>
    <name evidence="1" type="primary">rlmN</name>
    <name type="ordered locus">CGSHiEE_01185</name>
</gene>
<sequence length="390" mass="43570">MCNNEAKMSELLSVQSDAPAKKINLMDLTRQQMREFFKELGEKPFRADQLVKWIYHFGEDNFDNMTNINKKLREKLKAVAEIKAPEVAVEQRSADGTIKWAMQVGEQQVETVYIPEADRATLCVSSQVGCALACTFCSTAQQGFNRNLTVSEIIGQVWRASKIIGNFGVTGVRPITNVVMMGMGEPLLNVANVVPAMEIMLDDFAYGLSKRRVTLSTSGVVPALDNLSKMIDVALAISLHAPNDELRDEIVPINKKYNIKTLIDSVNRYLTVSNANHGKVTIEYVMLDHVNDGVEHAHQLADVLKNTPCKINLIPWNPFPEAPYAKSSNTRIDRFQKTLMEYDFTVIIRKTRGDDIDAACGQLAGDVIDRTKRTAMKRQFGQNIGVTEVN</sequence>
<evidence type="ECO:0000255" key="1">
    <source>
        <dbReference type="HAMAP-Rule" id="MF_01849"/>
    </source>
</evidence>
<evidence type="ECO:0000255" key="2">
    <source>
        <dbReference type="PROSITE-ProRule" id="PRU01266"/>
    </source>
</evidence>
<evidence type="ECO:0000305" key="3"/>
<accession>A5UAC2</accession>
<dbReference type="EC" id="2.1.1.192" evidence="1"/>
<dbReference type="EMBL" id="CP000671">
    <property type="protein sequence ID" value="ABQ97723.1"/>
    <property type="status" value="ALT_INIT"/>
    <property type="molecule type" value="Genomic_DNA"/>
</dbReference>
<dbReference type="SMR" id="A5UAC2"/>
<dbReference type="KEGG" id="hip:CGSHiEE_01185"/>
<dbReference type="HOGENOM" id="CLU_029101_0_0_6"/>
<dbReference type="GO" id="GO:0005737">
    <property type="term" value="C:cytoplasm"/>
    <property type="evidence" value="ECO:0007669"/>
    <property type="project" value="UniProtKB-SubCell"/>
</dbReference>
<dbReference type="GO" id="GO:0051539">
    <property type="term" value="F:4 iron, 4 sulfur cluster binding"/>
    <property type="evidence" value="ECO:0007669"/>
    <property type="project" value="UniProtKB-UniRule"/>
</dbReference>
<dbReference type="GO" id="GO:0046872">
    <property type="term" value="F:metal ion binding"/>
    <property type="evidence" value="ECO:0007669"/>
    <property type="project" value="UniProtKB-KW"/>
</dbReference>
<dbReference type="GO" id="GO:0070040">
    <property type="term" value="F:rRNA (adenine(2503)-C2-)-methyltransferase activity"/>
    <property type="evidence" value="ECO:0007669"/>
    <property type="project" value="UniProtKB-UniRule"/>
</dbReference>
<dbReference type="GO" id="GO:0019843">
    <property type="term" value="F:rRNA binding"/>
    <property type="evidence" value="ECO:0007669"/>
    <property type="project" value="UniProtKB-UniRule"/>
</dbReference>
<dbReference type="GO" id="GO:0002935">
    <property type="term" value="F:tRNA (adenine(37)-C2)-methyltransferase activity"/>
    <property type="evidence" value="ECO:0007669"/>
    <property type="project" value="UniProtKB-UniRule"/>
</dbReference>
<dbReference type="GO" id="GO:0000049">
    <property type="term" value="F:tRNA binding"/>
    <property type="evidence" value="ECO:0007669"/>
    <property type="project" value="UniProtKB-UniRule"/>
</dbReference>
<dbReference type="GO" id="GO:0070475">
    <property type="term" value="P:rRNA base methylation"/>
    <property type="evidence" value="ECO:0007669"/>
    <property type="project" value="UniProtKB-UniRule"/>
</dbReference>
<dbReference type="GO" id="GO:0030488">
    <property type="term" value="P:tRNA methylation"/>
    <property type="evidence" value="ECO:0007669"/>
    <property type="project" value="UniProtKB-UniRule"/>
</dbReference>
<dbReference type="CDD" id="cd01335">
    <property type="entry name" value="Radical_SAM"/>
    <property type="match status" value="1"/>
</dbReference>
<dbReference type="FunFam" id="1.10.150.530:FF:000003">
    <property type="entry name" value="Dual-specificity RNA methyltransferase RlmN"/>
    <property type="match status" value="1"/>
</dbReference>
<dbReference type="FunFam" id="3.20.20.70:FF:000008">
    <property type="entry name" value="Dual-specificity RNA methyltransferase RlmN"/>
    <property type="match status" value="1"/>
</dbReference>
<dbReference type="Gene3D" id="1.10.150.530">
    <property type="match status" value="1"/>
</dbReference>
<dbReference type="Gene3D" id="3.20.20.70">
    <property type="entry name" value="Aldolase class I"/>
    <property type="match status" value="1"/>
</dbReference>
<dbReference type="HAMAP" id="MF_01849">
    <property type="entry name" value="RNA_methyltr_RlmN"/>
    <property type="match status" value="1"/>
</dbReference>
<dbReference type="InterPro" id="IPR013785">
    <property type="entry name" value="Aldolase_TIM"/>
</dbReference>
<dbReference type="InterPro" id="IPR040072">
    <property type="entry name" value="Methyltransferase_A"/>
</dbReference>
<dbReference type="InterPro" id="IPR048641">
    <property type="entry name" value="RlmN_N"/>
</dbReference>
<dbReference type="InterPro" id="IPR027492">
    <property type="entry name" value="RNA_MTrfase_RlmN"/>
</dbReference>
<dbReference type="InterPro" id="IPR004383">
    <property type="entry name" value="rRNA_lsu_MTrfase_RlmN/Cfr"/>
</dbReference>
<dbReference type="InterPro" id="IPR007197">
    <property type="entry name" value="rSAM"/>
</dbReference>
<dbReference type="NCBIfam" id="NF008396">
    <property type="entry name" value="PRK11194.1"/>
    <property type="match status" value="1"/>
</dbReference>
<dbReference type="NCBIfam" id="TIGR00048">
    <property type="entry name" value="rRNA_mod_RlmN"/>
    <property type="match status" value="1"/>
</dbReference>
<dbReference type="PANTHER" id="PTHR30544">
    <property type="entry name" value="23S RRNA METHYLTRANSFERASE"/>
    <property type="match status" value="1"/>
</dbReference>
<dbReference type="PANTHER" id="PTHR30544:SF5">
    <property type="entry name" value="RADICAL SAM CORE DOMAIN-CONTAINING PROTEIN"/>
    <property type="match status" value="1"/>
</dbReference>
<dbReference type="Pfam" id="PF04055">
    <property type="entry name" value="Radical_SAM"/>
    <property type="match status" value="1"/>
</dbReference>
<dbReference type="Pfam" id="PF21016">
    <property type="entry name" value="RlmN_N"/>
    <property type="match status" value="1"/>
</dbReference>
<dbReference type="PIRSF" id="PIRSF006004">
    <property type="entry name" value="CHP00048"/>
    <property type="match status" value="1"/>
</dbReference>
<dbReference type="SFLD" id="SFLDF00275">
    <property type="entry name" value="adenosine_C2_methyltransferase"/>
    <property type="match status" value="1"/>
</dbReference>
<dbReference type="SFLD" id="SFLDS00029">
    <property type="entry name" value="Radical_SAM"/>
    <property type="match status" value="1"/>
</dbReference>
<dbReference type="SUPFAM" id="SSF102114">
    <property type="entry name" value="Radical SAM enzymes"/>
    <property type="match status" value="1"/>
</dbReference>
<dbReference type="PROSITE" id="PS51918">
    <property type="entry name" value="RADICAL_SAM"/>
    <property type="match status" value="1"/>
</dbReference>
<keyword id="KW-0004">4Fe-4S</keyword>
<keyword id="KW-0963">Cytoplasm</keyword>
<keyword id="KW-1015">Disulfide bond</keyword>
<keyword id="KW-0408">Iron</keyword>
<keyword id="KW-0411">Iron-sulfur</keyword>
<keyword id="KW-0479">Metal-binding</keyword>
<keyword id="KW-0489">Methyltransferase</keyword>
<keyword id="KW-0698">rRNA processing</keyword>
<keyword id="KW-0949">S-adenosyl-L-methionine</keyword>
<keyword id="KW-0808">Transferase</keyword>
<keyword id="KW-0819">tRNA processing</keyword>
<comment type="function">
    <text evidence="1">Specifically methylates position 2 of adenine 2503 in 23S rRNA and position 2 of adenine 37 in tRNAs. m2A2503 modification seems to play a crucial role in the proofreading step occurring at the peptidyl transferase center and thus would serve to optimize ribosomal fidelity.</text>
</comment>
<comment type="catalytic activity">
    <reaction evidence="1">
        <text>adenosine(2503) in 23S rRNA + 2 reduced [2Fe-2S]-[ferredoxin] + 2 S-adenosyl-L-methionine = 2-methyladenosine(2503) in 23S rRNA + 5'-deoxyadenosine + L-methionine + 2 oxidized [2Fe-2S]-[ferredoxin] + S-adenosyl-L-homocysteine</text>
        <dbReference type="Rhea" id="RHEA:42916"/>
        <dbReference type="Rhea" id="RHEA-COMP:10000"/>
        <dbReference type="Rhea" id="RHEA-COMP:10001"/>
        <dbReference type="Rhea" id="RHEA-COMP:10152"/>
        <dbReference type="Rhea" id="RHEA-COMP:10282"/>
        <dbReference type="ChEBI" id="CHEBI:17319"/>
        <dbReference type="ChEBI" id="CHEBI:33737"/>
        <dbReference type="ChEBI" id="CHEBI:33738"/>
        <dbReference type="ChEBI" id="CHEBI:57844"/>
        <dbReference type="ChEBI" id="CHEBI:57856"/>
        <dbReference type="ChEBI" id="CHEBI:59789"/>
        <dbReference type="ChEBI" id="CHEBI:74411"/>
        <dbReference type="ChEBI" id="CHEBI:74497"/>
        <dbReference type="EC" id="2.1.1.192"/>
    </reaction>
</comment>
<comment type="catalytic activity">
    <reaction evidence="1">
        <text>adenosine(37) in tRNA + 2 reduced [2Fe-2S]-[ferredoxin] + 2 S-adenosyl-L-methionine = 2-methyladenosine(37) in tRNA + 5'-deoxyadenosine + L-methionine + 2 oxidized [2Fe-2S]-[ferredoxin] + S-adenosyl-L-homocysteine</text>
        <dbReference type="Rhea" id="RHEA:43332"/>
        <dbReference type="Rhea" id="RHEA-COMP:10000"/>
        <dbReference type="Rhea" id="RHEA-COMP:10001"/>
        <dbReference type="Rhea" id="RHEA-COMP:10162"/>
        <dbReference type="Rhea" id="RHEA-COMP:10485"/>
        <dbReference type="ChEBI" id="CHEBI:17319"/>
        <dbReference type="ChEBI" id="CHEBI:33737"/>
        <dbReference type="ChEBI" id="CHEBI:33738"/>
        <dbReference type="ChEBI" id="CHEBI:57844"/>
        <dbReference type="ChEBI" id="CHEBI:57856"/>
        <dbReference type="ChEBI" id="CHEBI:59789"/>
        <dbReference type="ChEBI" id="CHEBI:74411"/>
        <dbReference type="ChEBI" id="CHEBI:74497"/>
        <dbReference type="EC" id="2.1.1.192"/>
    </reaction>
</comment>
<comment type="cofactor">
    <cofactor evidence="1">
        <name>[4Fe-4S] cluster</name>
        <dbReference type="ChEBI" id="CHEBI:49883"/>
    </cofactor>
    <text evidence="1">Binds 1 [4Fe-4S] cluster. The cluster is coordinated with 3 cysteines and an exchangeable S-adenosyl-L-methionine.</text>
</comment>
<comment type="subcellular location">
    <subcellularLocation>
        <location evidence="1">Cytoplasm</location>
    </subcellularLocation>
</comment>
<comment type="miscellaneous">
    <text evidence="1">Reaction proceeds by a ping-pong mechanism involving intermediate methylation of a conserved cysteine residue.</text>
</comment>
<comment type="similarity">
    <text evidence="1">Belongs to the radical SAM superfamily. RlmN family.</text>
</comment>
<comment type="sequence caution" evidence="3">
    <conflict type="erroneous initiation">
        <sequence resource="EMBL-CDS" id="ABQ97723"/>
    </conflict>
</comment>